<reference key="1">
    <citation type="journal article" date="2009" name="Infect. Immun.">
        <title>Comparative genomics reveal extensive transposon-mediated genomic plasticity and diversity among potential effector proteins within the genus Coxiella.</title>
        <authorList>
            <person name="Beare P.A."/>
            <person name="Unsworth N."/>
            <person name="Andoh M."/>
            <person name="Voth D.E."/>
            <person name="Omsland A."/>
            <person name="Gilk S.D."/>
            <person name="Williams K.P."/>
            <person name="Sobral B.W."/>
            <person name="Kupko J.J. III"/>
            <person name="Porcella S.F."/>
            <person name="Samuel J.E."/>
            <person name="Heinzen R.A."/>
        </authorList>
    </citation>
    <scope>NUCLEOTIDE SEQUENCE [LARGE SCALE GENOMIC DNA]</scope>
    <source>
        <strain>CbuK_Q154</strain>
    </source>
</reference>
<gene>
    <name evidence="1" type="primary">fabV</name>
    <name type="ordered locus">CbuK_0462</name>
</gene>
<comment type="function">
    <text evidence="1">Involved in the final reduction of the elongation cycle of fatty acid synthesis (FAS II). Catalyzes the reduction of a carbon-carbon double bond in an enoyl moiety that is covalently linked to an acyl carrier protein (ACP).</text>
</comment>
<comment type="catalytic activity">
    <reaction evidence="1">
        <text>a 2,3-saturated acyl-[ACP] + NAD(+) = a (2E)-enoyl-[ACP] + NADH + H(+)</text>
        <dbReference type="Rhea" id="RHEA:10240"/>
        <dbReference type="Rhea" id="RHEA-COMP:9925"/>
        <dbReference type="Rhea" id="RHEA-COMP:9926"/>
        <dbReference type="ChEBI" id="CHEBI:15378"/>
        <dbReference type="ChEBI" id="CHEBI:57540"/>
        <dbReference type="ChEBI" id="CHEBI:57945"/>
        <dbReference type="ChEBI" id="CHEBI:78784"/>
        <dbReference type="ChEBI" id="CHEBI:78785"/>
        <dbReference type="EC" id="1.3.1.9"/>
    </reaction>
</comment>
<comment type="pathway">
    <text evidence="1">Lipid metabolism; fatty acid biosynthesis.</text>
</comment>
<comment type="subunit">
    <text evidence="1">Monomer.</text>
</comment>
<comment type="similarity">
    <text evidence="1">Belongs to the TER reductase family.</text>
</comment>
<protein>
    <recommendedName>
        <fullName evidence="1">Enoyl-[acyl-carrier-protein] reductase [NADH]</fullName>
        <shortName evidence="1">ENR</shortName>
        <ecNumber evidence="1">1.3.1.9</ecNumber>
    </recommendedName>
</protein>
<evidence type="ECO:0000255" key="1">
    <source>
        <dbReference type="HAMAP-Rule" id="MF_01838"/>
    </source>
</evidence>
<name>FABV_COXB1</name>
<sequence>MIVQPKVRGFICTTAHPEGCARHVGEWINYAKQQPSLTGGPQKVLIIGASTGFGLASRIVAAFGAGAKTIGVFFERPASGKRTASPGWYNTAAFEKTALAAGLYAKSINGDAFSDEIKQQTIDLIQKDWQGGVDLVIYSIASPRRVHPRTGEIFNSVLKPIGQTYHNKTVDVMTGEVSPVSIEPATEKEIRDTEAVMGGDDWALWINALFKYNCLAEGVKTVAFTYIGPELTHAVYRNGTIGRAKLHLEKTARELDTQLESALSGQALISVNKALVTQASAAIPVVPLYISLLYKIMKEKNIHEGCIEQMWRLFKERLYSNQNIPTDSEGRIRIDDWEMREDVQAEIKRLWESINTGNVETLSDIAGYREDFYKLFGFGLNGIDYERGVEIEKAIPSITVTPENPE</sequence>
<organism>
    <name type="scientific">Coxiella burnetii (strain CbuK_Q154)</name>
    <name type="common">Coxiella burnetii (strain Q154)</name>
    <dbReference type="NCBI Taxonomy" id="434924"/>
    <lineage>
        <taxon>Bacteria</taxon>
        <taxon>Pseudomonadati</taxon>
        <taxon>Pseudomonadota</taxon>
        <taxon>Gammaproteobacteria</taxon>
        <taxon>Legionellales</taxon>
        <taxon>Coxiellaceae</taxon>
        <taxon>Coxiella</taxon>
    </lineage>
</organism>
<feature type="chain" id="PRO_1000188362" description="Enoyl-[acyl-carrier-protein] reductase [NADH]">
    <location>
        <begin position="1"/>
        <end position="406"/>
    </location>
</feature>
<feature type="active site" description="Proton donor" evidence="1">
    <location>
        <position position="236"/>
    </location>
</feature>
<feature type="binding site" evidence="1">
    <location>
        <begin position="48"/>
        <end position="53"/>
    </location>
    <ligand>
        <name>NAD(+)</name>
        <dbReference type="ChEBI" id="CHEBI:57540"/>
    </ligand>
</feature>
<feature type="binding site" evidence="1">
    <location>
        <begin position="74"/>
        <end position="75"/>
    </location>
    <ligand>
        <name>NAD(+)</name>
        <dbReference type="ChEBI" id="CHEBI:57540"/>
    </ligand>
</feature>
<feature type="binding site" evidence="1">
    <location>
        <begin position="111"/>
        <end position="112"/>
    </location>
    <ligand>
        <name>NAD(+)</name>
        <dbReference type="ChEBI" id="CHEBI:57540"/>
    </ligand>
</feature>
<feature type="binding site" evidence="1">
    <location>
        <begin position="140"/>
        <end position="141"/>
    </location>
    <ligand>
        <name>NAD(+)</name>
        <dbReference type="ChEBI" id="CHEBI:57540"/>
    </ligand>
</feature>
<feature type="binding site" evidence="1">
    <location>
        <position position="226"/>
    </location>
    <ligand>
        <name>substrate</name>
    </ligand>
</feature>
<feature type="binding site" evidence="1">
    <location>
        <position position="245"/>
    </location>
    <ligand>
        <name>NAD(+)</name>
        <dbReference type="ChEBI" id="CHEBI:57540"/>
    </ligand>
</feature>
<feature type="binding site" evidence="1">
    <location>
        <begin position="275"/>
        <end position="277"/>
    </location>
    <ligand>
        <name>NAD(+)</name>
        <dbReference type="ChEBI" id="CHEBI:57540"/>
    </ligand>
</feature>
<feature type="site" description="Plays an important role in discriminating NADH against NADPH" evidence="1">
    <location>
        <position position="75"/>
    </location>
</feature>
<accession>B6J5G0</accession>
<proteinExistence type="inferred from homology"/>
<dbReference type="EC" id="1.3.1.9" evidence="1"/>
<dbReference type="EMBL" id="CP001020">
    <property type="protein sequence ID" value="ACJ19744.1"/>
    <property type="molecule type" value="Genomic_DNA"/>
</dbReference>
<dbReference type="RefSeq" id="WP_005771488.1">
    <property type="nucleotide sequence ID" value="NC_011528.1"/>
</dbReference>
<dbReference type="SMR" id="B6J5G0"/>
<dbReference type="KEGG" id="cbc:CbuK_0462"/>
<dbReference type="HOGENOM" id="CLU_057698_1_0_6"/>
<dbReference type="UniPathway" id="UPA00094"/>
<dbReference type="GO" id="GO:0004318">
    <property type="term" value="F:enoyl-[acyl-carrier-protein] reductase (NADH) activity"/>
    <property type="evidence" value="ECO:0007669"/>
    <property type="project" value="UniProtKB-UniRule"/>
</dbReference>
<dbReference type="GO" id="GO:0051287">
    <property type="term" value="F:NAD binding"/>
    <property type="evidence" value="ECO:0007669"/>
    <property type="project" value="UniProtKB-UniRule"/>
</dbReference>
<dbReference type="GO" id="GO:0050343">
    <property type="term" value="F:trans-2-enoyl-CoA reductase (NADH) activity"/>
    <property type="evidence" value="ECO:0007669"/>
    <property type="project" value="TreeGrafter"/>
</dbReference>
<dbReference type="GO" id="GO:0006633">
    <property type="term" value="P:fatty acid biosynthetic process"/>
    <property type="evidence" value="ECO:0007669"/>
    <property type="project" value="UniProtKB-UniRule"/>
</dbReference>
<dbReference type="FunFam" id="3.40.50.720:FF:000221">
    <property type="entry name" value="Enoyl-[acyl-carrier-protein] reductase [NADH]"/>
    <property type="match status" value="1"/>
</dbReference>
<dbReference type="Gene3D" id="3.40.50.720">
    <property type="entry name" value="NAD(P)-binding Rossmann-like Domain"/>
    <property type="match status" value="1"/>
</dbReference>
<dbReference type="HAMAP" id="MF_01838">
    <property type="entry name" value="FabV_reductase"/>
    <property type="match status" value="1"/>
</dbReference>
<dbReference type="InterPro" id="IPR024906">
    <property type="entry name" value="Eno_Rdtase_FAD-bd_dom"/>
</dbReference>
<dbReference type="InterPro" id="IPR024910">
    <property type="entry name" value="Enoyl-CoA_Rdtase_cat_dom"/>
</dbReference>
<dbReference type="InterPro" id="IPR050048">
    <property type="entry name" value="FabV-like_NADH_b"/>
</dbReference>
<dbReference type="InterPro" id="IPR010758">
    <property type="entry name" value="Trans-2-enoyl-CoA_reductase"/>
</dbReference>
<dbReference type="NCBIfam" id="NF043048">
    <property type="entry name" value="EnoyACPredFabV"/>
    <property type="match status" value="1"/>
</dbReference>
<dbReference type="NCBIfam" id="NF010177">
    <property type="entry name" value="PRK13656.1"/>
    <property type="match status" value="1"/>
</dbReference>
<dbReference type="PANTHER" id="PTHR37480">
    <property type="entry name" value="ENOYL-[ACYL-CARRIER-PROTEIN] REDUCTASE [NADH]"/>
    <property type="match status" value="1"/>
</dbReference>
<dbReference type="PANTHER" id="PTHR37480:SF1">
    <property type="entry name" value="ENOYL-[ACYL-CARRIER-PROTEIN] REDUCTASE [NADH]"/>
    <property type="match status" value="1"/>
</dbReference>
<dbReference type="Pfam" id="PF07055">
    <property type="entry name" value="Eno-Rase_FAD_bd"/>
    <property type="match status" value="1"/>
</dbReference>
<dbReference type="Pfam" id="PF12242">
    <property type="entry name" value="Eno-Rase_NADH_b"/>
    <property type="match status" value="1"/>
</dbReference>
<dbReference type="Pfam" id="PF12241">
    <property type="entry name" value="Enoyl_reductase"/>
    <property type="match status" value="1"/>
</dbReference>
<keyword id="KW-0275">Fatty acid biosynthesis</keyword>
<keyword id="KW-0276">Fatty acid metabolism</keyword>
<keyword id="KW-0444">Lipid biosynthesis</keyword>
<keyword id="KW-0443">Lipid metabolism</keyword>
<keyword id="KW-0520">NAD</keyword>
<keyword id="KW-0560">Oxidoreductase</keyword>